<feature type="chain" id="PRO_0000073649" description="Calcium-binding protein LPS1-alpha">
    <location>
        <begin position="1"/>
        <end position="321"/>
    </location>
</feature>
<feature type="domain" description="EF-hand 1" evidence="1">
    <location>
        <begin position="15"/>
        <end position="49"/>
    </location>
</feature>
<feature type="domain" description="EF-hand 2" evidence="1">
    <location>
        <begin position="47"/>
        <end position="82"/>
    </location>
</feature>
<feature type="domain" description="EF-hand 3" evidence="1">
    <location>
        <begin position="85"/>
        <end position="120"/>
    </location>
</feature>
<feature type="domain" description="EF-hand 4" evidence="1">
    <location>
        <begin position="121"/>
        <end position="156"/>
    </location>
</feature>
<feature type="domain" description="EF-hand 5" evidence="1">
    <location>
        <begin position="165"/>
        <end position="200"/>
    </location>
</feature>
<feature type="domain" description="EF-hand 6" evidence="1">
    <location>
        <begin position="200"/>
        <end position="233"/>
    </location>
</feature>
<feature type="domain" description="EF-hand 7" evidence="1">
    <location>
        <begin position="232"/>
        <end position="267"/>
    </location>
</feature>
<feature type="domain" description="EF-hand 8" evidence="1">
    <location>
        <begin position="269"/>
        <end position="304"/>
    </location>
</feature>
<feature type="binding site" evidence="1">
    <location>
        <position position="29"/>
    </location>
    <ligand>
        <name>Ca(2+)</name>
        <dbReference type="ChEBI" id="CHEBI:29108"/>
        <label>1</label>
    </ligand>
</feature>
<feature type="binding site" evidence="1">
    <location>
        <position position="31"/>
    </location>
    <ligand>
        <name>Ca(2+)</name>
        <dbReference type="ChEBI" id="CHEBI:29108"/>
        <label>1</label>
    </ligand>
</feature>
<feature type="binding site" evidence="1">
    <location>
        <position position="33"/>
    </location>
    <ligand>
        <name>Ca(2+)</name>
        <dbReference type="ChEBI" id="CHEBI:29108"/>
        <label>1</label>
    </ligand>
</feature>
<feature type="binding site" evidence="1">
    <location>
        <position position="35"/>
    </location>
    <ligand>
        <name>Ca(2+)</name>
        <dbReference type="ChEBI" id="CHEBI:29108"/>
        <label>1</label>
    </ligand>
</feature>
<feature type="binding site" evidence="1">
    <location>
        <position position="40"/>
    </location>
    <ligand>
        <name>Ca(2+)</name>
        <dbReference type="ChEBI" id="CHEBI:29108"/>
        <label>1</label>
    </ligand>
</feature>
<feature type="binding site" evidence="1">
    <location>
        <position position="60"/>
    </location>
    <ligand>
        <name>Ca(2+)</name>
        <dbReference type="ChEBI" id="CHEBI:29108"/>
        <label>2</label>
    </ligand>
</feature>
<feature type="binding site" evidence="1">
    <location>
        <position position="62"/>
    </location>
    <ligand>
        <name>Ca(2+)</name>
        <dbReference type="ChEBI" id="CHEBI:29108"/>
        <label>2</label>
    </ligand>
</feature>
<feature type="binding site" evidence="1">
    <location>
        <position position="64"/>
    </location>
    <ligand>
        <name>Ca(2+)</name>
        <dbReference type="ChEBI" id="CHEBI:29108"/>
        <label>2</label>
    </ligand>
</feature>
<feature type="binding site" evidence="1">
    <location>
        <position position="66"/>
    </location>
    <ligand>
        <name>Ca(2+)</name>
        <dbReference type="ChEBI" id="CHEBI:29108"/>
        <label>2</label>
    </ligand>
</feature>
<feature type="binding site" evidence="1">
    <location>
        <position position="71"/>
    </location>
    <ligand>
        <name>Ca(2+)</name>
        <dbReference type="ChEBI" id="CHEBI:29108"/>
        <label>2</label>
    </ligand>
</feature>
<feature type="binding site" evidence="1">
    <location>
        <position position="98"/>
    </location>
    <ligand>
        <name>Ca(2+)</name>
        <dbReference type="ChEBI" id="CHEBI:29108"/>
        <label>3</label>
    </ligand>
</feature>
<feature type="binding site" evidence="1">
    <location>
        <position position="100"/>
    </location>
    <ligand>
        <name>Ca(2+)</name>
        <dbReference type="ChEBI" id="CHEBI:29108"/>
        <label>3</label>
    </ligand>
</feature>
<feature type="binding site" evidence="1">
    <location>
        <position position="102"/>
    </location>
    <ligand>
        <name>Ca(2+)</name>
        <dbReference type="ChEBI" id="CHEBI:29108"/>
        <label>3</label>
    </ligand>
</feature>
<feature type="binding site" evidence="1">
    <location>
        <position position="104"/>
    </location>
    <ligand>
        <name>Ca(2+)</name>
        <dbReference type="ChEBI" id="CHEBI:29108"/>
        <label>3</label>
    </ligand>
</feature>
<feature type="binding site" evidence="1">
    <location>
        <position position="109"/>
    </location>
    <ligand>
        <name>Ca(2+)</name>
        <dbReference type="ChEBI" id="CHEBI:29108"/>
        <label>3</label>
    </ligand>
</feature>
<feature type="binding site" evidence="1">
    <location>
        <position position="134"/>
    </location>
    <ligand>
        <name>Ca(2+)</name>
        <dbReference type="ChEBI" id="CHEBI:29108"/>
        <label>4</label>
    </ligand>
</feature>
<feature type="binding site" evidence="1">
    <location>
        <position position="136"/>
    </location>
    <ligand>
        <name>Ca(2+)</name>
        <dbReference type="ChEBI" id="CHEBI:29108"/>
        <label>4</label>
    </ligand>
</feature>
<feature type="binding site" evidence="1">
    <location>
        <position position="138"/>
    </location>
    <ligand>
        <name>Ca(2+)</name>
        <dbReference type="ChEBI" id="CHEBI:29108"/>
        <label>4</label>
    </ligand>
</feature>
<feature type="binding site" evidence="1">
    <location>
        <position position="140"/>
    </location>
    <ligand>
        <name>Ca(2+)</name>
        <dbReference type="ChEBI" id="CHEBI:29108"/>
        <label>4</label>
    </ligand>
</feature>
<feature type="binding site" evidence="1">
    <location>
        <position position="145"/>
    </location>
    <ligand>
        <name>Ca(2+)</name>
        <dbReference type="ChEBI" id="CHEBI:29108"/>
        <label>4</label>
    </ligand>
</feature>
<feature type="binding site" evidence="1">
    <location>
        <position position="178"/>
    </location>
    <ligand>
        <name>Ca(2+)</name>
        <dbReference type="ChEBI" id="CHEBI:29108"/>
        <label>5</label>
    </ligand>
</feature>
<feature type="binding site" evidence="1">
    <location>
        <position position="180"/>
    </location>
    <ligand>
        <name>Ca(2+)</name>
        <dbReference type="ChEBI" id="CHEBI:29108"/>
        <label>5</label>
    </ligand>
</feature>
<feature type="binding site" evidence="1">
    <location>
        <position position="182"/>
    </location>
    <ligand>
        <name>Ca(2+)</name>
        <dbReference type="ChEBI" id="CHEBI:29108"/>
        <label>5</label>
    </ligand>
</feature>
<feature type="binding site" evidence="1">
    <location>
        <position position="184"/>
    </location>
    <ligand>
        <name>Ca(2+)</name>
        <dbReference type="ChEBI" id="CHEBI:29108"/>
        <label>5</label>
    </ligand>
</feature>
<feature type="binding site" evidence="1">
    <location>
        <position position="189"/>
    </location>
    <ligand>
        <name>Ca(2+)</name>
        <dbReference type="ChEBI" id="CHEBI:29108"/>
        <label>5</label>
    </ligand>
</feature>
<feature type="binding site" evidence="1">
    <location>
        <position position="213"/>
    </location>
    <ligand>
        <name>Ca(2+)</name>
        <dbReference type="ChEBI" id="CHEBI:29108"/>
        <label>6</label>
    </ligand>
</feature>
<feature type="binding site" evidence="1">
    <location>
        <position position="215"/>
    </location>
    <ligand>
        <name>Ca(2+)</name>
        <dbReference type="ChEBI" id="CHEBI:29108"/>
        <label>6</label>
    </ligand>
</feature>
<feature type="binding site" evidence="1">
    <location>
        <position position="217"/>
    </location>
    <ligand>
        <name>Ca(2+)</name>
        <dbReference type="ChEBI" id="CHEBI:29108"/>
        <label>6</label>
    </ligand>
</feature>
<feature type="binding site" evidence="1">
    <location>
        <position position="219"/>
    </location>
    <ligand>
        <name>Ca(2+)</name>
        <dbReference type="ChEBI" id="CHEBI:29108"/>
        <label>6</label>
    </ligand>
</feature>
<feature type="binding site" evidence="1">
    <location>
        <position position="224"/>
    </location>
    <ligand>
        <name>Ca(2+)</name>
        <dbReference type="ChEBI" id="CHEBI:29108"/>
        <label>6</label>
    </ligand>
</feature>
<feature type="binding site" evidence="1">
    <location>
        <position position="245"/>
    </location>
    <ligand>
        <name>Ca(2+)</name>
        <dbReference type="ChEBI" id="CHEBI:29108"/>
        <label>7</label>
    </ligand>
</feature>
<feature type="binding site" evidence="1">
    <location>
        <position position="247"/>
    </location>
    <ligand>
        <name>Ca(2+)</name>
        <dbReference type="ChEBI" id="CHEBI:29108"/>
        <label>7</label>
    </ligand>
</feature>
<feature type="binding site" evidence="1">
    <location>
        <position position="249"/>
    </location>
    <ligand>
        <name>Ca(2+)</name>
        <dbReference type="ChEBI" id="CHEBI:29108"/>
        <label>7</label>
    </ligand>
</feature>
<feature type="binding site" evidence="1">
    <location>
        <position position="251"/>
    </location>
    <ligand>
        <name>Ca(2+)</name>
        <dbReference type="ChEBI" id="CHEBI:29108"/>
        <label>7</label>
    </ligand>
</feature>
<feature type="binding site" evidence="1">
    <location>
        <position position="256"/>
    </location>
    <ligand>
        <name>Ca(2+)</name>
        <dbReference type="ChEBI" id="CHEBI:29108"/>
        <label>7</label>
    </ligand>
</feature>
<feature type="binding site" evidence="2">
    <location>
        <position position="284"/>
    </location>
    <ligand>
        <name>Ca(2+)</name>
        <dbReference type="ChEBI" id="CHEBI:29108"/>
        <label>7</label>
    </ligand>
</feature>
<feature type="binding site" evidence="2">
    <location>
        <position position="286"/>
    </location>
    <ligand>
        <name>Ca(2+)</name>
        <dbReference type="ChEBI" id="CHEBI:29108"/>
        <label>7</label>
    </ligand>
</feature>
<feature type="binding site" evidence="2">
    <location>
        <position position="288"/>
    </location>
    <ligand>
        <name>Ca(2+)</name>
        <dbReference type="ChEBI" id="CHEBI:29108"/>
        <label>7</label>
    </ligand>
</feature>
<feature type="binding site" evidence="2">
    <location>
        <position position="293"/>
    </location>
    <ligand>
        <name>Ca(2+)</name>
        <dbReference type="ChEBI" id="CHEBI:29108"/>
        <label>7</label>
    </ligand>
</feature>
<accession>P09485</accession>
<proteinExistence type="evidence at transcript level"/>
<name>LPS1A_LYTPI</name>
<keyword id="KW-0106">Calcium</keyword>
<keyword id="KW-0479">Metal-binding</keyword>
<keyword id="KW-0677">Repeat</keyword>
<reference key="1">
    <citation type="journal article" date="1988" name="J. Biol. Chem.">
        <title>Tandem duplication and divergence of a sea urchin protein belonging to the troponin C superfamily.</title>
        <authorList>
            <person name="Xiang M."/>
            <person name="Bedard P.-A."/>
            <person name="Wessel G."/>
            <person name="Filion M."/>
            <person name="Brandhorst B.P."/>
            <person name="Klein W.H."/>
        </authorList>
    </citation>
    <scope>NUCLEOTIDE SEQUENCE [MRNA]</scope>
</reference>
<organism>
    <name type="scientific">Lytechinus pictus</name>
    <name type="common">Painted sea urchin</name>
    <dbReference type="NCBI Taxonomy" id="7653"/>
    <lineage>
        <taxon>Eukaryota</taxon>
        <taxon>Metazoa</taxon>
        <taxon>Echinodermata</taxon>
        <taxon>Eleutherozoa</taxon>
        <taxon>Echinozoa</taxon>
        <taxon>Echinoidea</taxon>
        <taxon>Euechinoidea</taxon>
        <taxon>Echinacea</taxon>
        <taxon>Temnopleuroida</taxon>
        <taxon>Toxopneustidae</taxon>
        <taxon>Lytechinus</taxon>
    </lineage>
</organism>
<dbReference type="EMBL" id="J04068">
    <property type="protein sequence ID" value="AAA30007.1"/>
    <property type="status" value="ALT_INIT"/>
    <property type="molecule type" value="mRNA"/>
</dbReference>
<dbReference type="PIR" id="A31797">
    <property type="entry name" value="A31797"/>
</dbReference>
<dbReference type="SMR" id="P09485"/>
<dbReference type="OrthoDB" id="26525at2759"/>
<dbReference type="GO" id="GO:0005509">
    <property type="term" value="F:calcium ion binding"/>
    <property type="evidence" value="ECO:0007669"/>
    <property type="project" value="InterPro"/>
</dbReference>
<dbReference type="FunFam" id="1.10.238.10:FF:000178">
    <property type="entry name" value="Calmodulin-2 A"/>
    <property type="match status" value="2"/>
</dbReference>
<dbReference type="Gene3D" id="1.10.238.10">
    <property type="entry name" value="EF-hand"/>
    <property type="match status" value="4"/>
</dbReference>
<dbReference type="InterPro" id="IPR011992">
    <property type="entry name" value="EF-hand-dom_pair"/>
</dbReference>
<dbReference type="InterPro" id="IPR018247">
    <property type="entry name" value="EF_Hand_1_Ca_BS"/>
</dbReference>
<dbReference type="InterPro" id="IPR002048">
    <property type="entry name" value="EF_hand_dom"/>
</dbReference>
<dbReference type="PANTHER" id="PTHR10827:SF85">
    <property type="entry name" value="CALCIUM-BINDING PROTEIN"/>
    <property type="match status" value="1"/>
</dbReference>
<dbReference type="PANTHER" id="PTHR10827">
    <property type="entry name" value="RETICULOCALBIN"/>
    <property type="match status" value="1"/>
</dbReference>
<dbReference type="Pfam" id="PF13202">
    <property type="entry name" value="EF-hand_5"/>
    <property type="match status" value="1"/>
</dbReference>
<dbReference type="Pfam" id="PF13499">
    <property type="entry name" value="EF-hand_7"/>
    <property type="match status" value="3"/>
</dbReference>
<dbReference type="SMART" id="SM00054">
    <property type="entry name" value="EFh"/>
    <property type="match status" value="7"/>
</dbReference>
<dbReference type="SUPFAM" id="SSF47473">
    <property type="entry name" value="EF-hand"/>
    <property type="match status" value="3"/>
</dbReference>
<dbReference type="PROSITE" id="PS00018">
    <property type="entry name" value="EF_HAND_1"/>
    <property type="match status" value="7"/>
</dbReference>
<dbReference type="PROSITE" id="PS50222">
    <property type="entry name" value="EF_HAND_2"/>
    <property type="match status" value="8"/>
</dbReference>
<evidence type="ECO:0000255" key="1">
    <source>
        <dbReference type="PROSITE-ProRule" id="PRU00448"/>
    </source>
</evidence>
<evidence type="ECO:0000305" key="2"/>
<sequence length="321" mass="37196">MSDRMAKFKAGMPKDAIEALKQEFKDNYDTNKDGTVSCAELVKLMNWTEEMAQNIIARLDVNSDGHMQFDEFILYMEGSTKERLYSSDEIKQMFDDLDKDGNGRISPDELNKGVREIYTKVVDGMANKLIQEADKDGDGHVNMEEFFDTLVVKLPIGMGPCKDEEYREYYKNEFEKFDKNGDGSLTTAEMSEFMSKSTKYSDKEIEYLISRVDLNDDGRVQFNEFFMHLDGVSKDHIKQQFMAIDKDKNGKISPEEMVFGITKIYRQMVDFEVAKLIKESSFEDDDGYINFNEFVNRFFSNCPYKINSLYWPIYLGCAVSI</sequence>
<protein>
    <recommendedName>
        <fullName>Calcium-binding protein LPS1-alpha</fullName>
    </recommendedName>
</protein>
<comment type="function">
    <text>Calcium-binding protein involved in larval development and metamorphosis. Likely to function as calcium buffers mediating the transport of calcium from the sea water to the blastocoel where calcium is required for skeleton formation.</text>
</comment>
<comment type="tissue specificity">
    <text>Aboral ectoderm, a squamous epithelium covering the surface of the late stage embryo and larva.</text>
</comment>
<comment type="developmental stage">
    <text>Activated early in development in aboral ectoderm cells.</text>
</comment>
<comment type="sequence caution" evidence="2">
    <conflict type="erroneous initiation">
        <sequence resource="EMBL-CDS" id="AAA30007"/>
    </conflict>
</comment>